<name>ODO1_PONAB</name>
<comment type="function">
    <text evidence="1">2-oxoglutarate dehydrogenase (E1o) component of the 2-oxoglutarate dehydrogenase complex (OGDHC). Participates in the first step, rate limiting for the overall conversion of 2-oxoglutarate to succinyl-CoA and CO(2) catalyzed by the whole OGDHC. Catalyzes the irreversible decarboxylation of 2-oxoglutarate (alpha-ketoglutarate) via the thiamine diphosphate (ThDP) cofactor and subsequent transfer of the decarboxylated acyl intermediate on an oxidized dihydrolipoyl group that is covalently amidated to the E2 enzyme (dihydrolipoyllysine-residue succinyltransferase or DLST). Plays a key role in the Krebs (citric acid) cycle, which is a common pathway for oxidation of fuel molecules, including carbohydrates, fatty acids, and amino acids. Can catalyze the decarboxylation of 2-oxoadipate in vitro, but at a much lower rate than 2-oxoglutarate. Mainly active in the mitochondrion. A fraction of the 2-oxoglutarate dehydrogenase complex also localizes in the nucleus and is required for lysine succinylation of histones: associates with KAT2A on chromatin and provides succinyl-CoA to histone succinyltransferase KAT2A.</text>
</comment>
<comment type="catalytic activity">
    <reaction evidence="1">
        <text>N(6)-[(R)-lipoyl]-L-lysyl-[protein] + 2-oxoglutarate + H(+) = N(6)-[(R)-S(8)-succinyldihydrolipoyl]-L-lysyl-[protein] + CO2</text>
        <dbReference type="Rhea" id="RHEA:12188"/>
        <dbReference type="Rhea" id="RHEA-COMP:10474"/>
        <dbReference type="Rhea" id="RHEA-COMP:20092"/>
        <dbReference type="ChEBI" id="CHEBI:15378"/>
        <dbReference type="ChEBI" id="CHEBI:16526"/>
        <dbReference type="ChEBI" id="CHEBI:16810"/>
        <dbReference type="ChEBI" id="CHEBI:83099"/>
        <dbReference type="ChEBI" id="CHEBI:83120"/>
        <dbReference type="EC" id="1.2.4.2"/>
    </reaction>
    <physiologicalReaction direction="left-to-right" evidence="1">
        <dbReference type="Rhea" id="RHEA:12189"/>
    </physiologicalReaction>
</comment>
<comment type="cofactor">
    <cofactor evidence="1">
        <name>thiamine diphosphate</name>
        <dbReference type="ChEBI" id="CHEBI:58937"/>
    </cofactor>
    <cofactor evidence="1">
        <name>Mg(2+)</name>
        <dbReference type="ChEBI" id="CHEBI:18420"/>
    </cofactor>
</comment>
<comment type="activity regulation">
    <text evidence="1">Calcium ions and ADP stimulate, whereas ATP and NADH reduce catalytic activity.</text>
</comment>
<comment type="subunit">
    <text evidence="1 2">Homodimer (By similarity). The 2-oxoglutarate dehydrogenase complex is composed of OGDH (2-oxoglutarate dehydrogenase; E1), DLST (dihydrolipoamide succinyltransferase; E2), DLD (dihydrolipoamide dehydrogenase; E3) and the assembly factor KGD4 (By similarity). It contains multiple copies of the three enzymatic components (E1, E2 and E3). In the nucleus, the 2-oxoglutarate dehydrogenase complex associates with KAT2A. Interacts with ABHD11; this interaction maintains the functional lipoylation of the 2-oxoglutarate dehydrogenase complex (By similarity).</text>
</comment>
<comment type="subcellular location">
    <subcellularLocation>
        <location evidence="3">Mitochondrion</location>
    </subcellularLocation>
    <subcellularLocation>
        <location evidence="1">Nucleus</location>
    </subcellularLocation>
    <text evidence="1">Mainly localizes in the mitochondrion. A small fraction localizes to the nucleus, where the 2-oxoglutarate dehydrogenase complex is required for histone succinylation.</text>
</comment>
<comment type="miscellaneous">
    <text evidence="5">The mitochondrial 2-oxoglutarate and 2-oxoadipate dehydrogenase complexes (OGDHC and OADHC, respectively) share their E2 (DLST) and E3 (dihydrolipoyl dehydrogenase or DLD) components, but the E1 component is specific to each complex (E1o and E1a (DHTK1), respectively).</text>
</comment>
<comment type="similarity">
    <text evidence="7">Belongs to the alpha-ketoglutarate dehydrogenase family.</text>
</comment>
<reference key="1">
    <citation type="submission" date="2004-11" db="EMBL/GenBank/DDBJ databases">
        <authorList>
            <consortium name="The German cDNA consortium"/>
        </authorList>
    </citation>
    <scope>NUCLEOTIDE SEQUENCE [LARGE SCALE MRNA]</scope>
    <source>
        <tissue>Kidney</tissue>
    </source>
</reference>
<gene>
    <name evidence="1" type="primary">OGDH</name>
</gene>
<feature type="transit peptide" description="Mitochondrion" evidence="6">
    <location>
        <begin position="1"/>
        <end position="40"/>
    </location>
</feature>
<feature type="chain" id="PRO_0000020435" description="2-oxoglutarate dehydrogenase complex component E1">
    <location>
        <begin position="41"/>
        <end position="1023"/>
    </location>
</feature>
<feature type="binding site" evidence="1">
    <location>
        <position position="143"/>
    </location>
    <ligand>
        <name>Ca(2+)</name>
        <dbReference type="ChEBI" id="CHEBI:29108"/>
    </ligand>
</feature>
<feature type="binding site" evidence="1">
    <location>
        <position position="156"/>
    </location>
    <ligand>
        <name>Ca(2+)</name>
        <dbReference type="ChEBI" id="CHEBI:29108"/>
    </ligand>
</feature>
<feature type="binding site" evidence="1">
    <location>
        <position position="158"/>
    </location>
    <ligand>
        <name>Ca(2+)</name>
        <dbReference type="ChEBI" id="CHEBI:29108"/>
    </ligand>
</feature>
<feature type="binding site" evidence="1">
    <location>
        <position position="312"/>
    </location>
    <ligand>
        <name>thiamine diphosphate</name>
        <dbReference type="ChEBI" id="CHEBI:58937"/>
    </ligand>
</feature>
<feature type="binding site" evidence="1">
    <location>
        <position position="411"/>
    </location>
    <ligand>
        <name>Mg(2+)</name>
        <dbReference type="ChEBI" id="CHEBI:18420"/>
    </ligand>
</feature>
<feature type="binding site" evidence="1">
    <location>
        <position position="411"/>
    </location>
    <ligand>
        <name>thiamine diphosphate</name>
        <dbReference type="ChEBI" id="CHEBI:58937"/>
    </ligand>
</feature>
<feature type="binding site" evidence="1">
    <location>
        <position position="444"/>
    </location>
    <ligand>
        <name>Mg(2+)</name>
        <dbReference type="ChEBI" id="CHEBI:18420"/>
    </ligand>
</feature>
<feature type="binding site" evidence="1">
    <location>
        <position position="444"/>
    </location>
    <ligand>
        <name>thiamine diphosphate</name>
        <dbReference type="ChEBI" id="CHEBI:58937"/>
    </ligand>
</feature>
<feature type="binding site" evidence="1">
    <location>
        <position position="446"/>
    </location>
    <ligand>
        <name>Mg(2+)</name>
        <dbReference type="ChEBI" id="CHEBI:18420"/>
    </ligand>
</feature>
<feature type="binding site" evidence="1">
    <location>
        <position position="446"/>
    </location>
    <ligand>
        <name>thiamine diphosphate</name>
        <dbReference type="ChEBI" id="CHEBI:58937"/>
    </ligand>
</feature>
<feature type="binding site" evidence="1">
    <location>
        <position position="676"/>
    </location>
    <ligand>
        <name>thiamine diphosphate</name>
        <dbReference type="ChEBI" id="CHEBI:58937"/>
    </ligand>
</feature>
<feature type="modified residue" description="N6-succinyllysine" evidence="4">
    <location>
        <position position="74"/>
    </location>
</feature>
<feature type="modified residue" description="Phosphoserine" evidence="4">
    <location>
        <position position="100"/>
    </location>
</feature>
<feature type="modified residue" description="N6-acetyllysine" evidence="4">
    <location>
        <position position="401"/>
    </location>
</feature>
<feature type="modified residue" description="N6-succinyllysine" evidence="4">
    <location>
        <position position="564"/>
    </location>
</feature>
<feature type="modified residue" description="N6-acetyllysine" evidence="1">
    <location>
        <position position="970"/>
    </location>
</feature>
<feature type="cross-link" description="Glycyl lysine isopeptide (Lys-Gly) (interchain with G-Cter in ubiquitin)" evidence="1">
    <location>
        <position position="534"/>
    </location>
</feature>
<evidence type="ECO:0000250" key="1">
    <source>
        <dbReference type="UniProtKB" id="Q02218"/>
    </source>
</evidence>
<evidence type="ECO:0000250" key="2">
    <source>
        <dbReference type="UniProtKB" id="Q148N0"/>
    </source>
</evidence>
<evidence type="ECO:0000250" key="3">
    <source>
        <dbReference type="UniProtKB" id="Q5XI78"/>
    </source>
</evidence>
<evidence type="ECO:0000250" key="4">
    <source>
        <dbReference type="UniProtKB" id="Q60597"/>
    </source>
</evidence>
<evidence type="ECO:0000250" key="5">
    <source>
        <dbReference type="UniProtKB" id="Q96HY7"/>
    </source>
</evidence>
<evidence type="ECO:0000255" key="6"/>
<evidence type="ECO:0000305" key="7"/>
<accession>Q5RCB8</accession>
<dbReference type="EC" id="1.2.4.2" evidence="1"/>
<dbReference type="EMBL" id="CR858358">
    <property type="protein sequence ID" value="CAH90589.1"/>
    <property type="molecule type" value="mRNA"/>
</dbReference>
<dbReference type="RefSeq" id="NP_001125317.1">
    <property type="nucleotide sequence ID" value="NM_001131845.1"/>
</dbReference>
<dbReference type="RefSeq" id="XP_054414850.1">
    <property type="nucleotide sequence ID" value="XM_054558875.1"/>
</dbReference>
<dbReference type="SMR" id="Q5RCB8"/>
<dbReference type="FunCoup" id="Q5RCB8">
    <property type="interactions" value="2065"/>
</dbReference>
<dbReference type="STRING" id="9601.ENSPPYP00000019712"/>
<dbReference type="Ensembl" id="ENSPPYT00000020488.3">
    <property type="protein sequence ID" value="ENSPPYP00000019712.3"/>
    <property type="gene ID" value="ENSPPYG00000017589.3"/>
</dbReference>
<dbReference type="GeneID" id="100172216"/>
<dbReference type="KEGG" id="pon:100172216"/>
<dbReference type="CTD" id="4967"/>
<dbReference type="eggNOG" id="KOG0450">
    <property type="taxonomic scope" value="Eukaryota"/>
</dbReference>
<dbReference type="GeneTree" id="ENSGT00950000183125"/>
<dbReference type="InParanoid" id="Q5RCB8"/>
<dbReference type="OrthoDB" id="413077at2759"/>
<dbReference type="Proteomes" id="UP000001595">
    <property type="component" value="Chromosome 7"/>
</dbReference>
<dbReference type="GO" id="GO:0005759">
    <property type="term" value="C:mitochondrial matrix"/>
    <property type="evidence" value="ECO:0007669"/>
    <property type="project" value="UniProtKB-ARBA"/>
</dbReference>
<dbReference type="GO" id="GO:0031966">
    <property type="term" value="C:mitochondrial membrane"/>
    <property type="evidence" value="ECO:0000250"/>
    <property type="project" value="UniProtKB"/>
</dbReference>
<dbReference type="GO" id="GO:0005739">
    <property type="term" value="C:mitochondrion"/>
    <property type="evidence" value="ECO:0000250"/>
    <property type="project" value="UniProtKB"/>
</dbReference>
<dbReference type="GO" id="GO:0005634">
    <property type="term" value="C:nucleus"/>
    <property type="evidence" value="ECO:0000250"/>
    <property type="project" value="UniProtKB"/>
</dbReference>
<dbReference type="GO" id="GO:0045252">
    <property type="term" value="C:oxoglutarate dehydrogenase complex"/>
    <property type="evidence" value="ECO:0000250"/>
    <property type="project" value="UniProtKB"/>
</dbReference>
<dbReference type="GO" id="GO:0046872">
    <property type="term" value="F:metal ion binding"/>
    <property type="evidence" value="ECO:0007669"/>
    <property type="project" value="UniProtKB-KW"/>
</dbReference>
<dbReference type="GO" id="GO:0004591">
    <property type="term" value="F:oxoglutarate dehydrogenase (succinyl-transferring) activity"/>
    <property type="evidence" value="ECO:0000250"/>
    <property type="project" value="UniProtKB"/>
</dbReference>
<dbReference type="GO" id="GO:0030976">
    <property type="term" value="F:thiamine pyrophosphate binding"/>
    <property type="evidence" value="ECO:0000250"/>
    <property type="project" value="UniProtKB"/>
</dbReference>
<dbReference type="GO" id="GO:0006103">
    <property type="term" value="P:2-oxoglutarate metabolic process"/>
    <property type="evidence" value="ECO:0000250"/>
    <property type="project" value="UniProtKB"/>
</dbReference>
<dbReference type="GO" id="GO:0006091">
    <property type="term" value="P:generation of precursor metabolites and energy"/>
    <property type="evidence" value="ECO:0000250"/>
    <property type="project" value="UniProtKB"/>
</dbReference>
<dbReference type="GO" id="GO:0006096">
    <property type="term" value="P:glycolytic process"/>
    <property type="evidence" value="ECO:0007669"/>
    <property type="project" value="UniProtKB-KW"/>
</dbReference>
<dbReference type="GO" id="GO:0006104">
    <property type="term" value="P:succinyl-CoA metabolic process"/>
    <property type="evidence" value="ECO:0000250"/>
    <property type="project" value="UniProtKB"/>
</dbReference>
<dbReference type="GO" id="GO:0006099">
    <property type="term" value="P:tricarboxylic acid cycle"/>
    <property type="evidence" value="ECO:0007669"/>
    <property type="project" value="TreeGrafter"/>
</dbReference>
<dbReference type="CDD" id="cd02016">
    <property type="entry name" value="TPP_E1_OGDC_like"/>
    <property type="match status" value="1"/>
</dbReference>
<dbReference type="FunFam" id="3.40.50.12470:FF:000007">
    <property type="entry name" value="2-oxoglutarate dehydrogenase e1 mitochondrial"/>
    <property type="match status" value="1"/>
</dbReference>
<dbReference type="FunFam" id="3.40.50.970:FF:000002">
    <property type="entry name" value="2-oxoglutarate dehydrogenase, E1 component"/>
    <property type="match status" value="1"/>
</dbReference>
<dbReference type="FunFam" id="1.10.287.1150:FF:000001">
    <property type="entry name" value="2-oxoglutarate dehydrogenase, mitochondrial isoform X1"/>
    <property type="match status" value="1"/>
</dbReference>
<dbReference type="FunFam" id="3.40.50.11610:FF:000008">
    <property type="entry name" value="2-oxoglutarate dehydrogenase, mitochondrial isoform X4"/>
    <property type="match status" value="1"/>
</dbReference>
<dbReference type="Gene3D" id="3.40.50.12470">
    <property type="match status" value="1"/>
</dbReference>
<dbReference type="Gene3D" id="3.40.50.970">
    <property type="match status" value="1"/>
</dbReference>
<dbReference type="Gene3D" id="3.40.50.11610">
    <property type="entry name" value="Multifunctional 2-oxoglutarate metabolism enzyme, C-terminal domain"/>
    <property type="match status" value="1"/>
</dbReference>
<dbReference type="Gene3D" id="1.10.287.1150">
    <property type="entry name" value="TPP helical domain"/>
    <property type="match status" value="1"/>
</dbReference>
<dbReference type="InterPro" id="IPR032106">
    <property type="entry name" value="2-oxogl_dehyd_N"/>
</dbReference>
<dbReference type="InterPro" id="IPR011603">
    <property type="entry name" value="2oxoglutarate_DH_E1"/>
</dbReference>
<dbReference type="InterPro" id="IPR001017">
    <property type="entry name" value="DH_E1"/>
</dbReference>
<dbReference type="InterPro" id="IPR042179">
    <property type="entry name" value="KGD_C_sf"/>
</dbReference>
<dbReference type="InterPro" id="IPR031717">
    <property type="entry name" value="ODO-1/KGD_C"/>
</dbReference>
<dbReference type="InterPro" id="IPR029061">
    <property type="entry name" value="THDP-binding"/>
</dbReference>
<dbReference type="InterPro" id="IPR005475">
    <property type="entry name" value="Transketolase-like_Pyr-bd"/>
</dbReference>
<dbReference type="NCBIfam" id="TIGR00239">
    <property type="entry name" value="2oxo_dh_E1"/>
    <property type="match status" value="1"/>
</dbReference>
<dbReference type="NCBIfam" id="NF006914">
    <property type="entry name" value="PRK09404.1"/>
    <property type="match status" value="1"/>
</dbReference>
<dbReference type="NCBIfam" id="NF008907">
    <property type="entry name" value="PRK12270.1"/>
    <property type="match status" value="1"/>
</dbReference>
<dbReference type="PANTHER" id="PTHR23152">
    <property type="entry name" value="2-OXOGLUTARATE DEHYDROGENASE"/>
    <property type="match status" value="1"/>
</dbReference>
<dbReference type="PANTHER" id="PTHR23152:SF7">
    <property type="entry name" value="2-OXOGLUTARATE DEHYDROGENASE COMPLEX COMPONENT E1"/>
    <property type="match status" value="1"/>
</dbReference>
<dbReference type="Pfam" id="PF16078">
    <property type="entry name" value="2-oxogl_dehyd_N"/>
    <property type="match status" value="1"/>
</dbReference>
<dbReference type="Pfam" id="PF00676">
    <property type="entry name" value="E1_dh"/>
    <property type="match status" value="1"/>
</dbReference>
<dbReference type="Pfam" id="PF16870">
    <property type="entry name" value="OxoGdeHyase_C"/>
    <property type="match status" value="1"/>
</dbReference>
<dbReference type="Pfam" id="PF02779">
    <property type="entry name" value="Transket_pyr"/>
    <property type="match status" value="1"/>
</dbReference>
<dbReference type="PIRSF" id="PIRSF000157">
    <property type="entry name" value="Oxoglu_dh_E1"/>
    <property type="match status" value="1"/>
</dbReference>
<dbReference type="SMART" id="SM00861">
    <property type="entry name" value="Transket_pyr"/>
    <property type="match status" value="1"/>
</dbReference>
<dbReference type="SUPFAM" id="SSF52518">
    <property type="entry name" value="Thiamin diphosphate-binding fold (THDP-binding)"/>
    <property type="match status" value="2"/>
</dbReference>
<organism>
    <name type="scientific">Pongo abelii</name>
    <name type="common">Sumatran orangutan</name>
    <name type="synonym">Pongo pygmaeus abelii</name>
    <dbReference type="NCBI Taxonomy" id="9601"/>
    <lineage>
        <taxon>Eukaryota</taxon>
        <taxon>Metazoa</taxon>
        <taxon>Chordata</taxon>
        <taxon>Craniata</taxon>
        <taxon>Vertebrata</taxon>
        <taxon>Euteleostomi</taxon>
        <taxon>Mammalia</taxon>
        <taxon>Eutheria</taxon>
        <taxon>Euarchontoglires</taxon>
        <taxon>Primates</taxon>
        <taxon>Haplorrhini</taxon>
        <taxon>Catarrhini</taxon>
        <taxon>Hominidae</taxon>
        <taxon>Pongo</taxon>
    </lineage>
</organism>
<protein>
    <recommendedName>
        <fullName evidence="1">2-oxoglutarate dehydrogenase complex component E1</fullName>
        <shortName>E1o</shortName>
        <shortName>OGDC-E1</shortName>
        <shortName>OGDH-E1</shortName>
        <ecNumber evidence="1">1.2.4.2</ecNumber>
    </recommendedName>
    <alternativeName>
        <fullName>2-oxoglutarate dehydrogenase, mitochondrial</fullName>
    </alternativeName>
    <alternativeName>
        <fullName>Alpha-ketoglutarate dehydrogenase</fullName>
        <shortName>Alpha-KGDH-E1</shortName>
    </alternativeName>
    <alternativeName>
        <fullName>Thiamine diphosphate (ThDP)-dependent 2-oxoglutarate dehydrogenase</fullName>
    </alternativeName>
</protein>
<keyword id="KW-0007">Acetylation</keyword>
<keyword id="KW-0106">Calcium</keyword>
<keyword id="KW-0324">Glycolysis</keyword>
<keyword id="KW-1017">Isopeptide bond</keyword>
<keyword id="KW-0460">Magnesium</keyword>
<keyword id="KW-0479">Metal-binding</keyword>
<keyword id="KW-0496">Mitochondrion</keyword>
<keyword id="KW-0539">Nucleus</keyword>
<keyword id="KW-0560">Oxidoreductase</keyword>
<keyword id="KW-0597">Phosphoprotein</keyword>
<keyword id="KW-1185">Reference proteome</keyword>
<keyword id="KW-0786">Thiamine pyrophosphate</keyword>
<keyword id="KW-0809">Transit peptide</keyword>
<keyword id="KW-0832">Ubl conjugation</keyword>
<proteinExistence type="evidence at transcript level"/>
<sequence length="1023" mass="115922">MFHLRTCAAKLRPLTASQTVKTFSQNRPAAARTFQQIRCYSAPVAAEPFLSGTSSNYVEEMYCAWLENPKSVHKSWDIFFRNTNAGAPPGTAYQSPLPLSRGSLAAVAHAQSLVEAQPNVDKLVEDHLAVQSLIRAYQIRGHHVAQLDPLGILDADLDSSVPADIISSTDKLGFYGLDESDLDKVFHLPTTTFIGGQESALPLREIIRRLEMAYCQHIGVEFMFINDLEQCQWIRQKFETPGIMQFTNEEKRTLLARLVRSTRFEEFLQRKWSSEKRFGLEGCEVLIPALKTIIDKSSENGVDYVIMGMPHRGRLNVLANVIRKELEQIFCQFDSKLEAADEGSGDVKYHLGMYHRRINRVTDRNITLSLVANPSHLEAADPVVMGKTKAEQFYCGDTEGKKVMSILLHGDAAFAGQGIVYETFHLSDLPSYTTHGTVHVVVNNQIGFTTDPRMARSSPYPTDVARVVNAPIFHVNSDDPEAVMYVCKVAAEWRSTFHKDVVVDLVCYRRNGHNEMDEPMFTQPLMYKQIRKQKPVLQKYAELLVSQGVVNQPEYEEEISKYDKICEEAFARSKDEKILHIKHWLDSPWPGFFTLDGQPRSMSCPSTGLTEDILTHIGNVASSVPVENFTIHGGLSRILKTRGEMVKNRTVDWALAEYMAFGSLLKEGIHIRLSGQDVERGTFSHRHHVLHDQNVDKRTCIPMNHLWPNQAPYTVCNSSLSEYGVLGFELGFAMASPNALVLWEAQFGDFHNTAQCIIDQFICPGQAKWVRQNGIVLLLPHGMEGMGPEHSSARPERFLQMCNDDPDVLPDLKEANFDINQLYDCNWVVVNCSTPGNFFHVLRRQILLPFRKPLIIFTPKSLLRHPEARSSFDEMLPGTHFQRVIPEDGPAAQNPENVKRLLFCTGKVYYDLTRERKARDMVGQVAITRIEQLSPFPFDLLLKEVQKYPSAELAWCQEEHKNQGYYDYVKPRLRTTISRAKPVWYAGRDPAAAPATGNKKTHLTELQRLLDTAFDLDIFKNFS</sequence>